<dbReference type="EMBL" id="BX640430">
    <property type="protein sequence ID" value="CAE37687.1"/>
    <property type="molecule type" value="Genomic_DNA"/>
</dbReference>
<dbReference type="RefSeq" id="WP_003810194.1">
    <property type="nucleotide sequence ID" value="NC_002928.3"/>
</dbReference>
<dbReference type="SMR" id="Q7W7W9"/>
<dbReference type="GeneID" id="93204170"/>
<dbReference type="KEGG" id="bpa:BPP2390"/>
<dbReference type="HOGENOM" id="CLU_074944_2_1_4"/>
<dbReference type="UniPathway" id="UPA00345"/>
<dbReference type="Proteomes" id="UP000001421">
    <property type="component" value="Chromosome"/>
</dbReference>
<dbReference type="GO" id="GO:0005737">
    <property type="term" value="C:cytoplasm"/>
    <property type="evidence" value="ECO:0007669"/>
    <property type="project" value="UniProtKB-SubCell"/>
</dbReference>
<dbReference type="GO" id="GO:0003746">
    <property type="term" value="F:translation elongation factor activity"/>
    <property type="evidence" value="ECO:0007669"/>
    <property type="project" value="UniProtKB-UniRule"/>
</dbReference>
<dbReference type="GO" id="GO:0043043">
    <property type="term" value="P:peptide biosynthetic process"/>
    <property type="evidence" value="ECO:0007669"/>
    <property type="project" value="InterPro"/>
</dbReference>
<dbReference type="CDD" id="cd04470">
    <property type="entry name" value="S1_EF-P_repeat_1"/>
    <property type="match status" value="1"/>
</dbReference>
<dbReference type="CDD" id="cd05794">
    <property type="entry name" value="S1_EF-P_repeat_2"/>
    <property type="match status" value="1"/>
</dbReference>
<dbReference type="FunFam" id="2.30.30.30:FF:000003">
    <property type="entry name" value="Elongation factor P"/>
    <property type="match status" value="1"/>
</dbReference>
<dbReference type="FunFam" id="2.40.50.140:FF:000004">
    <property type="entry name" value="Elongation factor P"/>
    <property type="match status" value="1"/>
</dbReference>
<dbReference type="FunFam" id="2.40.50.140:FF:000009">
    <property type="entry name" value="Elongation factor P"/>
    <property type="match status" value="1"/>
</dbReference>
<dbReference type="Gene3D" id="2.30.30.30">
    <property type="match status" value="1"/>
</dbReference>
<dbReference type="Gene3D" id="2.40.50.140">
    <property type="entry name" value="Nucleic acid-binding proteins"/>
    <property type="match status" value="2"/>
</dbReference>
<dbReference type="HAMAP" id="MF_00141">
    <property type="entry name" value="EF_P"/>
    <property type="match status" value="1"/>
</dbReference>
<dbReference type="InterPro" id="IPR015365">
    <property type="entry name" value="Elong-fact-P_C"/>
</dbReference>
<dbReference type="InterPro" id="IPR012340">
    <property type="entry name" value="NA-bd_OB-fold"/>
</dbReference>
<dbReference type="InterPro" id="IPR014722">
    <property type="entry name" value="Rib_uL2_dom2"/>
</dbReference>
<dbReference type="InterPro" id="IPR020599">
    <property type="entry name" value="Transl_elong_fac_P/YeiP"/>
</dbReference>
<dbReference type="InterPro" id="IPR013185">
    <property type="entry name" value="Transl_elong_KOW-like"/>
</dbReference>
<dbReference type="InterPro" id="IPR001059">
    <property type="entry name" value="Transl_elong_P/YeiP_cen"/>
</dbReference>
<dbReference type="InterPro" id="IPR013852">
    <property type="entry name" value="Transl_elong_P/YeiP_CS"/>
</dbReference>
<dbReference type="InterPro" id="IPR011768">
    <property type="entry name" value="Transl_elongation_fac_P"/>
</dbReference>
<dbReference type="InterPro" id="IPR008991">
    <property type="entry name" value="Translation_prot_SH3-like_sf"/>
</dbReference>
<dbReference type="NCBIfam" id="TIGR00038">
    <property type="entry name" value="efp"/>
    <property type="match status" value="1"/>
</dbReference>
<dbReference type="NCBIfam" id="NF001810">
    <property type="entry name" value="PRK00529.1"/>
    <property type="match status" value="1"/>
</dbReference>
<dbReference type="PANTHER" id="PTHR30053">
    <property type="entry name" value="ELONGATION FACTOR P"/>
    <property type="match status" value="1"/>
</dbReference>
<dbReference type="PANTHER" id="PTHR30053:SF12">
    <property type="entry name" value="ELONGATION FACTOR P (EF-P) FAMILY PROTEIN"/>
    <property type="match status" value="1"/>
</dbReference>
<dbReference type="Pfam" id="PF01132">
    <property type="entry name" value="EFP"/>
    <property type="match status" value="1"/>
</dbReference>
<dbReference type="Pfam" id="PF08207">
    <property type="entry name" value="EFP_N"/>
    <property type="match status" value="1"/>
</dbReference>
<dbReference type="Pfam" id="PF09285">
    <property type="entry name" value="Elong-fact-P_C"/>
    <property type="match status" value="1"/>
</dbReference>
<dbReference type="PIRSF" id="PIRSF005901">
    <property type="entry name" value="EF-P"/>
    <property type="match status" value="1"/>
</dbReference>
<dbReference type="SMART" id="SM01185">
    <property type="entry name" value="EFP"/>
    <property type="match status" value="1"/>
</dbReference>
<dbReference type="SMART" id="SM00841">
    <property type="entry name" value="Elong-fact-P_C"/>
    <property type="match status" value="1"/>
</dbReference>
<dbReference type="SUPFAM" id="SSF50249">
    <property type="entry name" value="Nucleic acid-binding proteins"/>
    <property type="match status" value="2"/>
</dbReference>
<dbReference type="SUPFAM" id="SSF50104">
    <property type="entry name" value="Translation proteins SH3-like domain"/>
    <property type="match status" value="1"/>
</dbReference>
<dbReference type="PROSITE" id="PS01275">
    <property type="entry name" value="EFP"/>
    <property type="match status" value="1"/>
</dbReference>
<keyword id="KW-0963">Cytoplasm</keyword>
<keyword id="KW-0251">Elongation factor</keyword>
<keyword id="KW-0648">Protein biosynthesis</keyword>
<sequence>MKTAQELRVGNVIMVGKDPLVVQKTEYNKSGRNAAVVKLKFKNLLTGSGSESVYKADEKFDVVVLERKECTYSYFGDPMYVFMDEEYNQYEIEADSMGDALNYLEEAMPVEVVFYDGRAISVELPTILVREITYTEPAVRGDTSGKVLKPAKINTGFELSVPLFCAIGDKIEIDTRTNEYRSRVN</sequence>
<protein>
    <recommendedName>
        <fullName evidence="1">Elongation factor P</fullName>
        <shortName evidence="1">EF-P</shortName>
    </recommendedName>
</protein>
<proteinExistence type="inferred from homology"/>
<feature type="chain" id="PRO_0000094208" description="Elongation factor P">
    <location>
        <begin position="1"/>
        <end position="185"/>
    </location>
</feature>
<gene>
    <name evidence="1" type="primary">efp</name>
    <name type="ordered locus">BPP2390</name>
</gene>
<evidence type="ECO:0000255" key="1">
    <source>
        <dbReference type="HAMAP-Rule" id="MF_00141"/>
    </source>
</evidence>
<name>EFP_BORPA</name>
<accession>Q7W7W9</accession>
<reference key="1">
    <citation type="journal article" date="2003" name="Nat. Genet.">
        <title>Comparative analysis of the genome sequences of Bordetella pertussis, Bordetella parapertussis and Bordetella bronchiseptica.</title>
        <authorList>
            <person name="Parkhill J."/>
            <person name="Sebaihia M."/>
            <person name="Preston A."/>
            <person name="Murphy L.D."/>
            <person name="Thomson N.R."/>
            <person name="Harris D.E."/>
            <person name="Holden M.T.G."/>
            <person name="Churcher C.M."/>
            <person name="Bentley S.D."/>
            <person name="Mungall K.L."/>
            <person name="Cerdeno-Tarraga A.-M."/>
            <person name="Temple L."/>
            <person name="James K.D."/>
            <person name="Harris B."/>
            <person name="Quail M.A."/>
            <person name="Achtman M."/>
            <person name="Atkin R."/>
            <person name="Baker S."/>
            <person name="Basham D."/>
            <person name="Bason N."/>
            <person name="Cherevach I."/>
            <person name="Chillingworth T."/>
            <person name="Collins M."/>
            <person name="Cronin A."/>
            <person name="Davis P."/>
            <person name="Doggett J."/>
            <person name="Feltwell T."/>
            <person name="Goble A."/>
            <person name="Hamlin N."/>
            <person name="Hauser H."/>
            <person name="Holroyd S."/>
            <person name="Jagels K."/>
            <person name="Leather S."/>
            <person name="Moule S."/>
            <person name="Norberczak H."/>
            <person name="O'Neil S."/>
            <person name="Ormond D."/>
            <person name="Price C."/>
            <person name="Rabbinowitsch E."/>
            <person name="Rutter S."/>
            <person name="Sanders M."/>
            <person name="Saunders D."/>
            <person name="Seeger K."/>
            <person name="Sharp S."/>
            <person name="Simmonds M."/>
            <person name="Skelton J."/>
            <person name="Squares R."/>
            <person name="Squares S."/>
            <person name="Stevens K."/>
            <person name="Unwin L."/>
            <person name="Whitehead S."/>
            <person name="Barrell B.G."/>
            <person name="Maskell D.J."/>
        </authorList>
    </citation>
    <scope>NUCLEOTIDE SEQUENCE [LARGE SCALE GENOMIC DNA]</scope>
    <source>
        <strain>12822 / ATCC BAA-587 / NCTC 13253</strain>
    </source>
</reference>
<organism>
    <name type="scientific">Bordetella parapertussis (strain 12822 / ATCC BAA-587 / NCTC 13253)</name>
    <dbReference type="NCBI Taxonomy" id="257311"/>
    <lineage>
        <taxon>Bacteria</taxon>
        <taxon>Pseudomonadati</taxon>
        <taxon>Pseudomonadota</taxon>
        <taxon>Betaproteobacteria</taxon>
        <taxon>Burkholderiales</taxon>
        <taxon>Alcaligenaceae</taxon>
        <taxon>Bordetella</taxon>
    </lineage>
</organism>
<comment type="function">
    <text evidence="1">Involved in peptide bond synthesis. Stimulates efficient translation and peptide-bond synthesis on native or reconstituted 70S ribosomes in vitro. Probably functions indirectly by altering the affinity of the ribosome for aminoacyl-tRNA, thus increasing their reactivity as acceptors for peptidyl transferase.</text>
</comment>
<comment type="pathway">
    <text evidence="1">Protein biosynthesis; polypeptide chain elongation.</text>
</comment>
<comment type="subcellular location">
    <subcellularLocation>
        <location evidence="1">Cytoplasm</location>
    </subcellularLocation>
</comment>
<comment type="similarity">
    <text evidence="1">Belongs to the elongation factor P family.</text>
</comment>